<organism>
    <name type="scientific">Danio rerio</name>
    <name type="common">Zebrafish</name>
    <name type="synonym">Brachydanio rerio</name>
    <dbReference type="NCBI Taxonomy" id="7955"/>
    <lineage>
        <taxon>Eukaryota</taxon>
        <taxon>Metazoa</taxon>
        <taxon>Chordata</taxon>
        <taxon>Craniata</taxon>
        <taxon>Vertebrata</taxon>
        <taxon>Euteleostomi</taxon>
        <taxon>Actinopterygii</taxon>
        <taxon>Neopterygii</taxon>
        <taxon>Teleostei</taxon>
        <taxon>Ostariophysi</taxon>
        <taxon>Cypriniformes</taxon>
        <taxon>Danionidae</taxon>
        <taxon>Danioninae</taxon>
        <taxon>Danio</taxon>
    </lineage>
</organism>
<sequence length="584" mass="64627">MSDTWSHIQAHKKQLDSLRERLQRRRKDPTQLGTEVGSVESGSARSDSPGPAIQSPPQVEVEHPPDPELEKRLLGYLSELSLSLPTDSLTITNQLNTSESPVSHSCIQSLLLKFSAQELIEVRQPSITSSSSSTLVTSVDHTKLWAMIGSAGQSQRTAVKRKADDITHQKRALGSSPSIQAPPSPPRKSSVSLATASISQLTASSGGGGGGADKKGRSNKVQASHLDMEIESLLSQQSTKEQQSKKVSQEILELLNTSSAKEQSIVEKFRSRGRAQVQEFCDYGTKEECVQSGDTPQPCTKLHFRRIINKHTDESLGDCSFLNTCFHMDTCKYVHYEIDSPPEAEGDALGPQAGAAELGLHSTVGDSNVGKLFPSQWICCDIRYLDVSILGKFAVVMADPPWDIHMELPYGTLTDDEMRKLNIPILQDDGFLFLWVTGRAMELGRECLSLWGYDRVDEIIWVKTNQLQRIIRTGRTGHWLNHGKEHCLVGVKGNPQGFNRGLDCDVIVAEVRSTSHKPDEIYGMIERLSPGTRKIELFGRPHNVQPNWITLGNQLDGIHLLDPEVVARFKKRYPDGVISKPKNM</sequence>
<accession>F1R777</accession>
<accession>A8KBZ7</accession>
<accession>Q6NX96</accession>
<dbReference type="EC" id="2.1.1.348" evidence="1 2"/>
<dbReference type="EMBL" id="BX005336">
    <property type="status" value="NOT_ANNOTATED_CDS"/>
    <property type="molecule type" value="Genomic_DNA"/>
</dbReference>
<dbReference type="EMBL" id="BC067182">
    <property type="protein sequence ID" value="AAH67182.1"/>
    <property type="molecule type" value="mRNA"/>
</dbReference>
<dbReference type="EMBL" id="BC154303">
    <property type="protein sequence ID" value="AAI54304.1"/>
    <property type="molecule type" value="mRNA"/>
</dbReference>
<dbReference type="RefSeq" id="NP_997945.1">
    <property type="nucleotide sequence ID" value="NM_212780.1"/>
</dbReference>
<dbReference type="SMR" id="F1R777"/>
<dbReference type="FunCoup" id="F1R777">
    <property type="interactions" value="772"/>
</dbReference>
<dbReference type="STRING" id="7955.ENSDARP00000022188"/>
<dbReference type="PaxDb" id="7955-ENSDARP00000022188"/>
<dbReference type="Ensembl" id="ENSDART00000019699">
    <property type="protein sequence ID" value="ENSDARP00000022188"/>
    <property type="gene ID" value="ENSDARG00000012827"/>
</dbReference>
<dbReference type="GeneID" id="100004398"/>
<dbReference type="KEGG" id="dre:100004398"/>
<dbReference type="AGR" id="ZFIN:ZDB-GENE-030131-9498"/>
<dbReference type="CTD" id="56339"/>
<dbReference type="ZFIN" id="ZDB-GENE-030131-9498">
    <property type="gene designation" value="mettl3"/>
</dbReference>
<dbReference type="eggNOG" id="KOG2098">
    <property type="taxonomic scope" value="Eukaryota"/>
</dbReference>
<dbReference type="HOGENOM" id="CLU_018702_4_0_1"/>
<dbReference type="InParanoid" id="F1R777"/>
<dbReference type="OMA" id="HMDMEIE"/>
<dbReference type="OrthoDB" id="10262526at2759"/>
<dbReference type="PhylomeDB" id="F1R777"/>
<dbReference type="TreeFam" id="TF323854"/>
<dbReference type="BRENDA" id="2.1.1.348">
    <property type="organism ID" value="928"/>
</dbReference>
<dbReference type="PRO" id="PR:F1R777"/>
<dbReference type="Proteomes" id="UP000000437">
    <property type="component" value="Chromosome 7"/>
</dbReference>
<dbReference type="Bgee" id="ENSDARG00000012827">
    <property type="expression patterns" value="Expressed in mature ovarian follicle and 27 other cell types or tissues"/>
</dbReference>
<dbReference type="GO" id="GO:0005737">
    <property type="term" value="C:cytoplasm"/>
    <property type="evidence" value="ECO:0007669"/>
    <property type="project" value="UniProtKB-SubCell"/>
</dbReference>
<dbReference type="GO" id="GO:0016607">
    <property type="term" value="C:nuclear speck"/>
    <property type="evidence" value="ECO:0000250"/>
    <property type="project" value="UniProtKB"/>
</dbReference>
<dbReference type="GO" id="GO:0005634">
    <property type="term" value="C:nucleus"/>
    <property type="evidence" value="ECO:0000250"/>
    <property type="project" value="UniProtKB"/>
</dbReference>
<dbReference type="GO" id="GO:0036396">
    <property type="term" value="C:RNA N6-methyladenosine methyltransferase complex"/>
    <property type="evidence" value="ECO:0000250"/>
    <property type="project" value="UniProtKB"/>
</dbReference>
<dbReference type="GO" id="GO:0016422">
    <property type="term" value="F:mRNA (2'-O-methyladenosine-N6-)-methyltransferase activity"/>
    <property type="evidence" value="ECO:0000315"/>
    <property type="project" value="ZFIN"/>
</dbReference>
<dbReference type="GO" id="GO:0003729">
    <property type="term" value="F:mRNA binding"/>
    <property type="evidence" value="ECO:0000250"/>
    <property type="project" value="UniProtKB"/>
</dbReference>
<dbReference type="GO" id="GO:0001734">
    <property type="term" value="F:mRNA m(6)A methyltransferase activity"/>
    <property type="evidence" value="ECO:0000315"/>
    <property type="project" value="ZFIN"/>
</dbReference>
<dbReference type="GO" id="GO:0046982">
    <property type="term" value="F:protein heterodimerization activity"/>
    <property type="evidence" value="ECO:0000250"/>
    <property type="project" value="UniProtKB"/>
</dbReference>
<dbReference type="GO" id="GO:0008173">
    <property type="term" value="F:RNA methyltransferase activity"/>
    <property type="evidence" value="ECO:0000250"/>
    <property type="project" value="UniProtKB"/>
</dbReference>
<dbReference type="GO" id="GO:1904047">
    <property type="term" value="F:S-adenosyl-L-methionine binding"/>
    <property type="evidence" value="ECO:0000250"/>
    <property type="project" value="UniProtKB"/>
</dbReference>
<dbReference type="GO" id="GO:0034644">
    <property type="term" value="P:cellular response to UV"/>
    <property type="evidence" value="ECO:0000250"/>
    <property type="project" value="UniProtKB"/>
</dbReference>
<dbReference type="GO" id="GO:0006974">
    <property type="term" value="P:DNA damage response"/>
    <property type="evidence" value="ECO:0000250"/>
    <property type="project" value="UniProtKB"/>
</dbReference>
<dbReference type="GO" id="GO:0098508">
    <property type="term" value="P:endothelial to hematopoietic transition"/>
    <property type="evidence" value="ECO:0000315"/>
    <property type="project" value="UniProtKB"/>
</dbReference>
<dbReference type="GO" id="GO:0030317">
    <property type="term" value="P:flagellated sperm motility"/>
    <property type="evidence" value="ECO:0000315"/>
    <property type="project" value="ZFIN"/>
</dbReference>
<dbReference type="GO" id="GO:0021861">
    <property type="term" value="P:forebrain radial glial cell differentiation"/>
    <property type="evidence" value="ECO:0000250"/>
    <property type="project" value="UniProtKB"/>
</dbReference>
<dbReference type="GO" id="GO:0042063">
    <property type="term" value="P:gliogenesis"/>
    <property type="evidence" value="ECO:0000250"/>
    <property type="project" value="UniProtKB"/>
</dbReference>
<dbReference type="GO" id="GO:0071425">
    <property type="term" value="P:hematopoietic stem cell proliferation"/>
    <property type="evidence" value="ECO:0000315"/>
    <property type="project" value="ZFIN"/>
</dbReference>
<dbReference type="GO" id="GO:0061157">
    <property type="term" value="P:mRNA destabilization"/>
    <property type="evidence" value="ECO:0000250"/>
    <property type="project" value="UniProtKB"/>
</dbReference>
<dbReference type="GO" id="GO:0016556">
    <property type="term" value="P:mRNA modification"/>
    <property type="evidence" value="ECO:0000318"/>
    <property type="project" value="GO_Central"/>
</dbReference>
<dbReference type="GO" id="GO:0006397">
    <property type="term" value="P:mRNA processing"/>
    <property type="evidence" value="ECO:0000315"/>
    <property type="project" value="UniProtKB"/>
</dbReference>
<dbReference type="GO" id="GO:0045746">
    <property type="term" value="P:negative regulation of Notch signaling pathway"/>
    <property type="evidence" value="ECO:0000315"/>
    <property type="project" value="UniProtKB"/>
</dbReference>
<dbReference type="GO" id="GO:0060339">
    <property type="term" value="P:negative regulation of type I interferon-mediated signaling pathway"/>
    <property type="evidence" value="ECO:0000250"/>
    <property type="project" value="UniProtKB"/>
</dbReference>
<dbReference type="GO" id="GO:0060853">
    <property type="term" value="P:Notch signaling pathway involved in arterial endothelial cell fate commitment"/>
    <property type="evidence" value="ECO:0000315"/>
    <property type="project" value="ZFIN"/>
</dbReference>
<dbReference type="GO" id="GO:0001556">
    <property type="term" value="P:oocyte maturation"/>
    <property type="evidence" value="ECO:0000315"/>
    <property type="project" value="ZFIN"/>
</dbReference>
<dbReference type="GO" id="GO:0048477">
    <property type="term" value="P:oogenesis"/>
    <property type="evidence" value="ECO:0000250"/>
    <property type="project" value="UniProtKB"/>
</dbReference>
<dbReference type="GO" id="GO:1903679">
    <property type="term" value="P:positive regulation of cap-independent translational initiation"/>
    <property type="evidence" value="ECO:0000250"/>
    <property type="project" value="UniProtKB"/>
</dbReference>
<dbReference type="GO" id="GO:0045727">
    <property type="term" value="P:positive regulation of translation"/>
    <property type="evidence" value="ECO:0000250"/>
    <property type="project" value="UniProtKB"/>
</dbReference>
<dbReference type="GO" id="GO:0031053">
    <property type="term" value="P:primary miRNA processing"/>
    <property type="evidence" value="ECO:0000250"/>
    <property type="project" value="UniProtKB"/>
</dbReference>
<dbReference type="GO" id="GO:0042981">
    <property type="term" value="P:regulation of apoptotic process"/>
    <property type="evidence" value="ECO:0000316"/>
    <property type="project" value="ZFIN"/>
</dbReference>
<dbReference type="GO" id="GO:1902036">
    <property type="term" value="P:regulation of hematopoietic stem cell differentiation"/>
    <property type="evidence" value="ECO:0000315"/>
    <property type="project" value="UniProtKB"/>
</dbReference>
<dbReference type="GO" id="GO:0051445">
    <property type="term" value="P:regulation of meiotic cell cycle"/>
    <property type="evidence" value="ECO:0000250"/>
    <property type="project" value="UniProtKB"/>
</dbReference>
<dbReference type="GO" id="GO:0090365">
    <property type="term" value="P:regulation of mRNA modification"/>
    <property type="evidence" value="ECO:0000315"/>
    <property type="project" value="ZFIN"/>
</dbReference>
<dbReference type="GO" id="GO:0045580">
    <property type="term" value="P:regulation of T cell differentiation"/>
    <property type="evidence" value="ECO:0000250"/>
    <property type="project" value="UniProtKB"/>
</dbReference>
<dbReference type="GO" id="GO:1901342">
    <property type="term" value="P:regulation of vasculature development"/>
    <property type="evidence" value="ECO:0000315"/>
    <property type="project" value="ZFIN"/>
</dbReference>
<dbReference type="GO" id="GO:0001510">
    <property type="term" value="P:RNA methylation"/>
    <property type="evidence" value="ECO:0007669"/>
    <property type="project" value="InterPro"/>
</dbReference>
<dbReference type="GO" id="GO:0007530">
    <property type="term" value="P:sex determination"/>
    <property type="evidence" value="ECO:0000315"/>
    <property type="project" value="ZFIN"/>
</dbReference>
<dbReference type="GO" id="GO:0007283">
    <property type="term" value="P:spermatogenesis"/>
    <property type="evidence" value="ECO:0000250"/>
    <property type="project" value="UniProtKB"/>
</dbReference>
<dbReference type="GO" id="GO:0019827">
    <property type="term" value="P:stem cell population maintenance"/>
    <property type="evidence" value="ECO:0000250"/>
    <property type="project" value="UniProtKB"/>
</dbReference>
<dbReference type="InterPro" id="IPR025848">
    <property type="entry name" value="MT-A70"/>
</dbReference>
<dbReference type="InterPro" id="IPR007757">
    <property type="entry name" value="MT-A70-like"/>
</dbReference>
<dbReference type="InterPro" id="IPR029063">
    <property type="entry name" value="SAM-dependent_MTases_sf"/>
</dbReference>
<dbReference type="PANTHER" id="PTHR12829">
    <property type="entry name" value="N6-ADENOSINE-METHYLTRANSFERASE"/>
    <property type="match status" value="1"/>
</dbReference>
<dbReference type="PANTHER" id="PTHR12829:SF7">
    <property type="entry name" value="N6-ADENOSINE-METHYLTRANSFERASE CATALYTIC SUBUNIT"/>
    <property type="match status" value="1"/>
</dbReference>
<dbReference type="Pfam" id="PF05063">
    <property type="entry name" value="MT-A70"/>
    <property type="match status" value="1"/>
</dbReference>
<dbReference type="SUPFAM" id="SSF53335">
    <property type="entry name" value="S-adenosyl-L-methionine-dependent methyltransferases"/>
    <property type="match status" value="1"/>
</dbReference>
<dbReference type="PROSITE" id="PS51143">
    <property type="entry name" value="MT_A70"/>
    <property type="match status" value="1"/>
</dbReference>
<dbReference type="PROSITE" id="PS51563">
    <property type="entry name" value="SAM_MTA70L_1"/>
    <property type="match status" value="1"/>
</dbReference>
<gene>
    <name evidence="7" type="primary">mettl3</name>
</gene>
<protein>
    <recommendedName>
        <fullName>N(6)-adenosine-methyltransferase subunit METTL3</fullName>
        <ecNumber evidence="1 2">2.1.1.348</ecNumber>
    </recommendedName>
    <alternativeName>
        <fullName>N(6)-adenosine-methyltransferase 70 kDa subunit</fullName>
        <shortName>MT-A70</shortName>
    </alternativeName>
</protein>
<comment type="function">
    <text evidence="1 2 6">The METTL3-METTL14 heterodimer forms a N6-methyltransferase complex that methylates adenosine residues at the N(6) position of some RNAs and regulates various processes such as the circadian clock, differentiation of embryonic and hematopoietic stem cells, cortical neurogenesis, response to DNA damage, differentiation of T-cells and primary miRNA processing (PubMed:28869969). In the heterodimer formed with mettl14, mettl3 constitutes the catalytic core (By similarity). N6-methyladenosine (m6A), which takes place at the 5'-[AG]GAC-3' consensus sites of some mRNAs, plays a role in mRNA stability, processing and translation efficiency (By similarity). M6A is also involved in hematopoietic stem cells specification: m6A methylation and subsequent destabilization of mRNAs, such as notch1a, leads to decreased Notch signaling, promoting endothelial to hematopoietic transition (PubMed:28869969). M6A also takes place in other RNA molecules, such as primary miRNA (pri-miRNAs) (By similarity). Mediates methylation of pri-miRNAs (By similarity).</text>
</comment>
<comment type="catalytic activity">
    <reaction evidence="1 2">
        <text>an adenosine in mRNA + S-adenosyl-L-methionine = an N(6)-methyladenosine in mRNA + S-adenosyl-L-homocysteine + H(+)</text>
        <dbReference type="Rhea" id="RHEA:55584"/>
        <dbReference type="Rhea" id="RHEA-COMP:12414"/>
        <dbReference type="Rhea" id="RHEA-COMP:12417"/>
        <dbReference type="ChEBI" id="CHEBI:15378"/>
        <dbReference type="ChEBI" id="CHEBI:57856"/>
        <dbReference type="ChEBI" id="CHEBI:59789"/>
        <dbReference type="ChEBI" id="CHEBI:74411"/>
        <dbReference type="ChEBI" id="CHEBI:74449"/>
        <dbReference type="EC" id="2.1.1.348"/>
    </reaction>
</comment>
<comment type="subunit">
    <text evidence="1">Heterodimer; heterodimerizes with mettl14 to form an antiparallel heterodimer that constitutes an active methyltransferase. Component of the WMM complex, a N6-methyltransferase complex composed of a catalytic subcomplex, named MAC, and of an associated subcomplex, named MACOM. The MAC subcomplex is composed of mettl3 and mettl14.</text>
</comment>
<comment type="subcellular location">
    <subcellularLocation>
        <location evidence="1">Nucleus</location>
    </subcellularLocation>
    <subcellularLocation>
        <location evidence="1">Nucleus speckle</location>
    </subcellularLocation>
    <subcellularLocation>
        <location evidence="1">Cytoplasm</location>
    </subcellularLocation>
    <text evidence="1">Colocalizes with speckles in interphase nuclei. Suggesting that it may be associated with nuclear pre-mRNA splicing components.</text>
</comment>
<comment type="tissue specificity">
    <text evidence="6">Expressed in the hemato-vascular system: enriched in sorted endothelial cells and haemogenic endothelium (PubMed:28869969).</text>
</comment>
<comment type="developmental stage">
    <text evidence="5">Maternally expressed from the 4-cell stage and ubiquitously expressed through early embryogenesis, with enriched expression in the brain region at 36 hpf (hours post fertilization) (PubMed:24407421).</text>
</comment>
<comment type="domain">
    <text evidence="1">Gate loop 1 and gate loop 2 regions are adjacent to the S-adenosyl-L-homocysteine-binding site and display large conformational changes upon ligand-binding. They may play an important role in adenosine recognition. The interface loop contributes to the heterodimer interaction.</text>
</comment>
<comment type="disruption phenotype">
    <text evidence="6">Lethality 10 days post-fertilization (dpf) due to severe hematopoietic defects (PubMed:28869969). Levels of N6-methyladenosine (m6A)-containing mRNAs are significantly decreased and emergence of hematopoietic stem cells is blocked (PubMed:28869969).</text>
</comment>
<comment type="similarity">
    <text evidence="3">Belongs to the MT-A70-like family.</text>
</comment>
<reference key="1">
    <citation type="journal article" date="2013" name="Nature">
        <title>The zebrafish reference genome sequence and its relationship to the human genome.</title>
        <authorList>
            <person name="Howe K."/>
            <person name="Clark M.D."/>
            <person name="Torroja C.F."/>
            <person name="Torrance J."/>
            <person name="Berthelot C."/>
            <person name="Muffato M."/>
            <person name="Collins J.E."/>
            <person name="Humphray S."/>
            <person name="McLaren K."/>
            <person name="Matthews L."/>
            <person name="McLaren S."/>
            <person name="Sealy I."/>
            <person name="Caccamo M."/>
            <person name="Churcher C."/>
            <person name="Scott C."/>
            <person name="Barrett J.C."/>
            <person name="Koch R."/>
            <person name="Rauch G.J."/>
            <person name="White S."/>
            <person name="Chow W."/>
            <person name="Kilian B."/>
            <person name="Quintais L.T."/>
            <person name="Guerra-Assuncao J.A."/>
            <person name="Zhou Y."/>
            <person name="Gu Y."/>
            <person name="Yen J."/>
            <person name="Vogel J.H."/>
            <person name="Eyre T."/>
            <person name="Redmond S."/>
            <person name="Banerjee R."/>
            <person name="Chi J."/>
            <person name="Fu B."/>
            <person name="Langley E."/>
            <person name="Maguire S.F."/>
            <person name="Laird G.K."/>
            <person name="Lloyd D."/>
            <person name="Kenyon E."/>
            <person name="Donaldson S."/>
            <person name="Sehra H."/>
            <person name="Almeida-King J."/>
            <person name="Loveland J."/>
            <person name="Trevanion S."/>
            <person name="Jones M."/>
            <person name="Quail M."/>
            <person name="Willey D."/>
            <person name="Hunt A."/>
            <person name="Burton J."/>
            <person name="Sims S."/>
            <person name="McLay K."/>
            <person name="Plumb B."/>
            <person name="Davis J."/>
            <person name="Clee C."/>
            <person name="Oliver K."/>
            <person name="Clark R."/>
            <person name="Riddle C."/>
            <person name="Elliot D."/>
            <person name="Threadgold G."/>
            <person name="Harden G."/>
            <person name="Ware D."/>
            <person name="Begum S."/>
            <person name="Mortimore B."/>
            <person name="Kerry G."/>
            <person name="Heath P."/>
            <person name="Phillimore B."/>
            <person name="Tracey A."/>
            <person name="Corby N."/>
            <person name="Dunn M."/>
            <person name="Johnson C."/>
            <person name="Wood J."/>
            <person name="Clark S."/>
            <person name="Pelan S."/>
            <person name="Griffiths G."/>
            <person name="Smith M."/>
            <person name="Glithero R."/>
            <person name="Howden P."/>
            <person name="Barker N."/>
            <person name="Lloyd C."/>
            <person name="Stevens C."/>
            <person name="Harley J."/>
            <person name="Holt K."/>
            <person name="Panagiotidis G."/>
            <person name="Lovell J."/>
            <person name="Beasley H."/>
            <person name="Henderson C."/>
            <person name="Gordon D."/>
            <person name="Auger K."/>
            <person name="Wright D."/>
            <person name="Collins J."/>
            <person name="Raisen C."/>
            <person name="Dyer L."/>
            <person name="Leung K."/>
            <person name="Robertson L."/>
            <person name="Ambridge K."/>
            <person name="Leongamornlert D."/>
            <person name="McGuire S."/>
            <person name="Gilderthorp R."/>
            <person name="Griffiths C."/>
            <person name="Manthravadi D."/>
            <person name="Nichol S."/>
            <person name="Barker G."/>
            <person name="Whitehead S."/>
            <person name="Kay M."/>
            <person name="Brown J."/>
            <person name="Murnane C."/>
            <person name="Gray E."/>
            <person name="Humphries M."/>
            <person name="Sycamore N."/>
            <person name="Barker D."/>
            <person name="Saunders D."/>
            <person name="Wallis J."/>
            <person name="Babbage A."/>
            <person name="Hammond S."/>
            <person name="Mashreghi-Mohammadi M."/>
            <person name="Barr L."/>
            <person name="Martin S."/>
            <person name="Wray P."/>
            <person name="Ellington A."/>
            <person name="Matthews N."/>
            <person name="Ellwood M."/>
            <person name="Woodmansey R."/>
            <person name="Clark G."/>
            <person name="Cooper J."/>
            <person name="Tromans A."/>
            <person name="Grafham D."/>
            <person name="Skuce C."/>
            <person name="Pandian R."/>
            <person name="Andrews R."/>
            <person name="Harrison E."/>
            <person name="Kimberley A."/>
            <person name="Garnett J."/>
            <person name="Fosker N."/>
            <person name="Hall R."/>
            <person name="Garner P."/>
            <person name="Kelly D."/>
            <person name="Bird C."/>
            <person name="Palmer S."/>
            <person name="Gehring I."/>
            <person name="Berger A."/>
            <person name="Dooley C.M."/>
            <person name="Ersan-Urun Z."/>
            <person name="Eser C."/>
            <person name="Geiger H."/>
            <person name="Geisler M."/>
            <person name="Karotki L."/>
            <person name="Kirn A."/>
            <person name="Konantz J."/>
            <person name="Konantz M."/>
            <person name="Oberlander M."/>
            <person name="Rudolph-Geiger S."/>
            <person name="Teucke M."/>
            <person name="Lanz C."/>
            <person name="Raddatz G."/>
            <person name="Osoegawa K."/>
            <person name="Zhu B."/>
            <person name="Rapp A."/>
            <person name="Widaa S."/>
            <person name="Langford C."/>
            <person name="Yang F."/>
            <person name="Schuster S.C."/>
            <person name="Carter N.P."/>
            <person name="Harrow J."/>
            <person name="Ning Z."/>
            <person name="Herrero J."/>
            <person name="Searle S.M."/>
            <person name="Enright A."/>
            <person name="Geisler R."/>
            <person name="Plasterk R.H."/>
            <person name="Lee C."/>
            <person name="Westerfield M."/>
            <person name="de Jong P.J."/>
            <person name="Zon L.I."/>
            <person name="Postlethwait J.H."/>
            <person name="Nusslein-Volhard C."/>
            <person name="Hubbard T.J."/>
            <person name="Roest Crollius H."/>
            <person name="Rogers J."/>
            <person name="Stemple D.L."/>
        </authorList>
    </citation>
    <scope>NUCLEOTIDE SEQUENCE [LARGE SCALE GENOMIC DNA]</scope>
    <source>
        <strain>Tuebingen</strain>
    </source>
</reference>
<reference key="2">
    <citation type="submission" date="2004-03" db="EMBL/GenBank/DDBJ databases">
        <authorList>
            <consortium name="NIH - Zebrafish Gene Collection (ZGC) project"/>
        </authorList>
    </citation>
    <scope>NUCLEOTIDE SEQUENCE [LARGE SCALE MRNA]</scope>
    <source>
        <tissue>Kidney</tissue>
        <tissue>Ovary</tissue>
    </source>
</reference>
<reference key="3">
    <citation type="journal article" date="2014" name="Cell Res.">
        <title>Mammalian WTAP is a regulatory subunit of the RNA N6-methyladenosine methyltransferase.</title>
        <authorList>
            <person name="Ping X.L."/>
            <person name="Sun B.F."/>
            <person name="Wang L."/>
            <person name="Xiao W."/>
            <person name="Yang X."/>
            <person name="Wang W.J."/>
            <person name="Adhikari S."/>
            <person name="Shi Y."/>
            <person name="Lv Y."/>
            <person name="Chen Y.S."/>
            <person name="Zhao X."/>
            <person name="Li A."/>
            <person name="Yang Y."/>
            <person name="Dahal U."/>
            <person name="Lou X.M."/>
            <person name="Liu X."/>
            <person name="Huang J."/>
            <person name="Yuan W.P."/>
            <person name="Zhu X.F."/>
            <person name="Cheng T."/>
            <person name="Zhao Y.L."/>
            <person name="Wang X."/>
            <person name="Danielsen J.M."/>
            <person name="Liu F."/>
            <person name="Yang Y.G."/>
        </authorList>
    </citation>
    <scope>DEVELOPMENTAL STAGE</scope>
</reference>
<reference key="4">
    <citation type="journal article" date="2017" name="Nature">
        <title>m(6)A modulates haematopoietic stem and progenitor cell specification.</title>
        <authorList>
            <person name="Zhang C."/>
            <person name="Chen Y."/>
            <person name="Sun B."/>
            <person name="Wang L."/>
            <person name="Yang Y."/>
            <person name="Ma D."/>
            <person name="Lv J."/>
            <person name="Heng J."/>
            <person name="Ding Y."/>
            <person name="Xue Y."/>
            <person name="Lu X."/>
            <person name="Xiao W."/>
            <person name="Yang Y.G."/>
            <person name="Liu F."/>
        </authorList>
    </citation>
    <scope>FUNCTION</scope>
    <scope>TISSUE SPECIFICITY</scope>
    <scope>DISRUPTION PHENOTYPE</scope>
</reference>
<evidence type="ECO:0000250" key="1">
    <source>
        <dbReference type="UniProtKB" id="Q86U44"/>
    </source>
</evidence>
<evidence type="ECO:0000250" key="2">
    <source>
        <dbReference type="UniProtKB" id="Q8C3P7"/>
    </source>
</evidence>
<evidence type="ECO:0000255" key="3">
    <source>
        <dbReference type="PROSITE-ProRule" id="PRU00489"/>
    </source>
</evidence>
<evidence type="ECO:0000256" key="4">
    <source>
        <dbReference type="SAM" id="MobiDB-lite"/>
    </source>
</evidence>
<evidence type="ECO:0000269" key="5">
    <source>
    </source>
</evidence>
<evidence type="ECO:0000269" key="6">
    <source>
    </source>
</evidence>
<evidence type="ECO:0000303" key="7">
    <source>
    </source>
</evidence>
<evidence type="ECO:0000305" key="8"/>
<feature type="chain" id="PRO_0000425902" description="N(6)-adenosine-methyltransferase subunit METTL3">
    <location>
        <begin position="1"/>
        <end position="584"/>
    </location>
</feature>
<feature type="region of interest" description="Disordered" evidence="4">
    <location>
        <begin position="1"/>
        <end position="65"/>
    </location>
</feature>
<feature type="region of interest" description="Disordered" evidence="4">
    <location>
        <begin position="162"/>
        <end position="221"/>
    </location>
</feature>
<feature type="region of interest" description="Gate loop 1" evidence="1">
    <location>
        <begin position="400"/>
        <end position="414"/>
    </location>
</feature>
<feature type="region of interest" description="Interaction with METTL14" evidence="1">
    <location>
        <begin position="454"/>
        <end position="458"/>
    </location>
</feature>
<feature type="region of interest" description="Interphase loop" evidence="1">
    <location>
        <begin position="466"/>
        <end position="483"/>
    </location>
</feature>
<feature type="region of interest" description="Interaction with METTL14" evidence="1">
    <location>
        <begin position="468"/>
        <end position="484"/>
    </location>
</feature>
<feature type="region of interest" description="Positively charged region required for RNA-binding" evidence="1">
    <location>
        <begin position="469"/>
        <end position="482"/>
    </location>
</feature>
<feature type="region of interest" description="Gate loop 2" evidence="1">
    <location>
        <begin position="511"/>
        <end position="519"/>
    </location>
</feature>
<feature type="short sequence motif" description="Nuclear localization signal" evidence="1">
    <location>
        <begin position="213"/>
        <end position="220"/>
    </location>
</feature>
<feature type="compositionally biased region" description="Polar residues" evidence="4">
    <location>
        <begin position="187"/>
        <end position="204"/>
    </location>
</feature>
<feature type="binding site" evidence="1">
    <location>
        <begin position="381"/>
        <end position="382"/>
    </location>
    <ligand>
        <name>S-adenosyl-L-methionine</name>
        <dbReference type="ChEBI" id="CHEBI:59789"/>
    </ligand>
</feature>
<feature type="binding site" evidence="1">
    <location>
        <position position="399"/>
    </location>
    <ligand>
        <name>S-adenosyl-L-methionine</name>
        <dbReference type="ChEBI" id="CHEBI:59789"/>
    </ligand>
</feature>
<feature type="binding site" evidence="1">
    <location>
        <position position="517"/>
    </location>
    <ligand>
        <name>S-adenosyl-L-methionine</name>
        <dbReference type="ChEBI" id="CHEBI:59789"/>
    </ligand>
</feature>
<feature type="binding site" evidence="1">
    <location>
        <begin position="540"/>
        <end position="543"/>
    </location>
    <ligand>
        <name>S-adenosyl-L-methionine</name>
        <dbReference type="ChEBI" id="CHEBI:59789"/>
    </ligand>
</feature>
<feature type="binding site" evidence="1">
    <location>
        <begin position="553"/>
        <end position="554"/>
    </location>
    <ligand>
        <name>S-adenosyl-L-methionine</name>
        <dbReference type="ChEBI" id="CHEBI:59789"/>
    </ligand>
</feature>
<feature type="site" description="Interaction with METTL14" evidence="1">
    <location>
        <position position="442"/>
    </location>
</feature>
<feature type="site" description="Interaction with METTL14" evidence="1">
    <location>
        <position position="445"/>
    </location>
</feature>
<feature type="sequence conflict" description="In Ref. 2; AAH67182/AAI54304." evidence="8" ref="2">
    <original>L</original>
    <variation>P</variation>
    <location>
        <position position="173"/>
    </location>
</feature>
<feature type="sequence conflict" description="In Ref. 2; AAI54304." evidence="8" ref="2">
    <original>S</original>
    <variation>A</variation>
    <location>
        <position position="176"/>
    </location>
</feature>
<feature type="sequence conflict" description="In Ref. 2; AAI54304." evidence="8" ref="2">
    <original>A</original>
    <variation>T</variation>
    <location>
        <position position="356"/>
    </location>
</feature>
<name>MTA70_DANRE</name>
<proteinExistence type="evidence at transcript level"/>
<keyword id="KW-0963">Cytoplasm</keyword>
<keyword id="KW-0221">Differentiation</keyword>
<keyword id="KW-0227">DNA damage</keyword>
<keyword id="KW-0489">Methyltransferase</keyword>
<keyword id="KW-0539">Nucleus</keyword>
<keyword id="KW-1185">Reference proteome</keyword>
<keyword id="KW-0694">RNA-binding</keyword>
<keyword id="KW-0949">S-adenosyl-L-methionine</keyword>
<keyword id="KW-0744">Spermatogenesis</keyword>
<keyword id="KW-0808">Transferase</keyword>